<organism>
    <name type="scientific">Brucella abortus (strain S19)</name>
    <dbReference type="NCBI Taxonomy" id="430066"/>
    <lineage>
        <taxon>Bacteria</taxon>
        <taxon>Pseudomonadati</taxon>
        <taxon>Pseudomonadota</taxon>
        <taxon>Alphaproteobacteria</taxon>
        <taxon>Hyphomicrobiales</taxon>
        <taxon>Brucellaceae</taxon>
        <taxon>Brucella/Ochrobactrum group</taxon>
        <taxon>Brucella</taxon>
    </lineage>
</organism>
<comment type="catalytic activity">
    <reaction evidence="1">
        <text>(6R)-10-formyltetrahydrofolate + 5-amino-1-(5-phospho-beta-D-ribosyl)imidazole-4-carboxamide = 5-formamido-1-(5-phospho-D-ribosyl)imidazole-4-carboxamide + (6S)-5,6,7,8-tetrahydrofolate</text>
        <dbReference type="Rhea" id="RHEA:22192"/>
        <dbReference type="ChEBI" id="CHEBI:57453"/>
        <dbReference type="ChEBI" id="CHEBI:58467"/>
        <dbReference type="ChEBI" id="CHEBI:58475"/>
        <dbReference type="ChEBI" id="CHEBI:195366"/>
        <dbReference type="EC" id="2.1.2.3"/>
    </reaction>
</comment>
<comment type="catalytic activity">
    <reaction evidence="1">
        <text>IMP + H2O = 5-formamido-1-(5-phospho-D-ribosyl)imidazole-4-carboxamide</text>
        <dbReference type="Rhea" id="RHEA:18445"/>
        <dbReference type="ChEBI" id="CHEBI:15377"/>
        <dbReference type="ChEBI" id="CHEBI:58053"/>
        <dbReference type="ChEBI" id="CHEBI:58467"/>
        <dbReference type="EC" id="3.5.4.10"/>
    </reaction>
</comment>
<comment type="pathway">
    <text evidence="1">Purine metabolism; IMP biosynthesis via de novo pathway; 5-formamido-1-(5-phospho-D-ribosyl)imidazole-4-carboxamide from 5-amino-1-(5-phospho-D-ribosyl)imidazole-4-carboxamide (10-formyl THF route): step 1/1.</text>
</comment>
<comment type="pathway">
    <text evidence="1">Purine metabolism; IMP biosynthesis via de novo pathway; IMP from 5-formamido-1-(5-phospho-D-ribosyl)imidazole-4-carboxamide: step 1/1.</text>
</comment>
<comment type="domain">
    <text evidence="1">The IMP cyclohydrolase activity resides in the N-terminal region.</text>
</comment>
<comment type="similarity">
    <text evidence="1">Belongs to the PurH family.</text>
</comment>
<evidence type="ECO:0000255" key="1">
    <source>
        <dbReference type="HAMAP-Rule" id="MF_00139"/>
    </source>
</evidence>
<evidence type="ECO:0000255" key="2">
    <source>
        <dbReference type="PROSITE-ProRule" id="PRU01202"/>
    </source>
</evidence>
<gene>
    <name evidence="1" type="primary">purH</name>
    <name type="ordered locus">BAbS19_I17050</name>
</gene>
<dbReference type="EC" id="2.1.2.3" evidence="1"/>
<dbReference type="EC" id="3.5.4.10" evidence="1"/>
<dbReference type="EMBL" id="CP000887">
    <property type="protein sequence ID" value="ACD73187.1"/>
    <property type="molecule type" value="Genomic_DNA"/>
</dbReference>
<dbReference type="RefSeq" id="WP_002964894.1">
    <property type="nucleotide sequence ID" value="NC_010742.1"/>
</dbReference>
<dbReference type="SMR" id="B2S7P0"/>
<dbReference type="GeneID" id="93017844"/>
<dbReference type="KEGG" id="bmc:BAbS19_I17050"/>
<dbReference type="HOGENOM" id="CLU_016316_5_2_5"/>
<dbReference type="UniPathway" id="UPA00074">
    <property type="reaction ID" value="UER00133"/>
</dbReference>
<dbReference type="UniPathway" id="UPA00074">
    <property type="reaction ID" value="UER00135"/>
</dbReference>
<dbReference type="Proteomes" id="UP000002565">
    <property type="component" value="Chromosome 1"/>
</dbReference>
<dbReference type="GO" id="GO:0005829">
    <property type="term" value="C:cytosol"/>
    <property type="evidence" value="ECO:0007669"/>
    <property type="project" value="TreeGrafter"/>
</dbReference>
<dbReference type="GO" id="GO:0003937">
    <property type="term" value="F:IMP cyclohydrolase activity"/>
    <property type="evidence" value="ECO:0007669"/>
    <property type="project" value="UniProtKB-UniRule"/>
</dbReference>
<dbReference type="GO" id="GO:0004643">
    <property type="term" value="F:phosphoribosylaminoimidazolecarboxamide formyltransferase activity"/>
    <property type="evidence" value="ECO:0007669"/>
    <property type="project" value="UniProtKB-UniRule"/>
</dbReference>
<dbReference type="GO" id="GO:0006189">
    <property type="term" value="P:'de novo' IMP biosynthetic process"/>
    <property type="evidence" value="ECO:0007669"/>
    <property type="project" value="UniProtKB-UniRule"/>
</dbReference>
<dbReference type="CDD" id="cd01421">
    <property type="entry name" value="IMPCH"/>
    <property type="match status" value="1"/>
</dbReference>
<dbReference type="FunFam" id="3.40.140.20:FF:000001">
    <property type="entry name" value="Bifunctional purine biosynthesis protein PurH"/>
    <property type="match status" value="1"/>
</dbReference>
<dbReference type="FunFam" id="3.40.140.20:FF:000002">
    <property type="entry name" value="Bifunctional purine biosynthesis protein PurH"/>
    <property type="match status" value="1"/>
</dbReference>
<dbReference type="FunFam" id="3.40.50.1380:FF:000001">
    <property type="entry name" value="Bifunctional purine biosynthesis protein PurH"/>
    <property type="match status" value="1"/>
</dbReference>
<dbReference type="Gene3D" id="3.40.140.20">
    <property type="match status" value="2"/>
</dbReference>
<dbReference type="Gene3D" id="3.40.50.1380">
    <property type="entry name" value="Methylglyoxal synthase-like domain"/>
    <property type="match status" value="1"/>
</dbReference>
<dbReference type="HAMAP" id="MF_00139">
    <property type="entry name" value="PurH"/>
    <property type="match status" value="1"/>
</dbReference>
<dbReference type="InterPro" id="IPR024051">
    <property type="entry name" value="AICAR_Tfase_dup_dom_sf"/>
</dbReference>
<dbReference type="InterPro" id="IPR016193">
    <property type="entry name" value="Cytidine_deaminase-like"/>
</dbReference>
<dbReference type="InterPro" id="IPR011607">
    <property type="entry name" value="MGS-like_dom"/>
</dbReference>
<dbReference type="InterPro" id="IPR036914">
    <property type="entry name" value="MGS-like_dom_sf"/>
</dbReference>
<dbReference type="InterPro" id="IPR002695">
    <property type="entry name" value="PurH-like"/>
</dbReference>
<dbReference type="NCBIfam" id="NF002049">
    <property type="entry name" value="PRK00881.1"/>
    <property type="match status" value="1"/>
</dbReference>
<dbReference type="NCBIfam" id="TIGR00355">
    <property type="entry name" value="purH"/>
    <property type="match status" value="1"/>
</dbReference>
<dbReference type="PANTHER" id="PTHR11692:SF0">
    <property type="entry name" value="BIFUNCTIONAL PURINE BIOSYNTHESIS PROTEIN ATIC"/>
    <property type="match status" value="1"/>
</dbReference>
<dbReference type="PANTHER" id="PTHR11692">
    <property type="entry name" value="BIFUNCTIONAL PURINE BIOSYNTHESIS PROTEIN PURH"/>
    <property type="match status" value="1"/>
</dbReference>
<dbReference type="Pfam" id="PF01808">
    <property type="entry name" value="AICARFT_IMPCHas"/>
    <property type="match status" value="1"/>
</dbReference>
<dbReference type="Pfam" id="PF02142">
    <property type="entry name" value="MGS"/>
    <property type="match status" value="1"/>
</dbReference>
<dbReference type="PIRSF" id="PIRSF000414">
    <property type="entry name" value="AICARFT_IMPCHas"/>
    <property type="match status" value="1"/>
</dbReference>
<dbReference type="SMART" id="SM00798">
    <property type="entry name" value="AICARFT_IMPCHas"/>
    <property type="match status" value="1"/>
</dbReference>
<dbReference type="SMART" id="SM00851">
    <property type="entry name" value="MGS"/>
    <property type="match status" value="1"/>
</dbReference>
<dbReference type="SUPFAM" id="SSF53927">
    <property type="entry name" value="Cytidine deaminase-like"/>
    <property type="match status" value="1"/>
</dbReference>
<dbReference type="SUPFAM" id="SSF52335">
    <property type="entry name" value="Methylglyoxal synthase-like"/>
    <property type="match status" value="1"/>
</dbReference>
<dbReference type="PROSITE" id="PS51855">
    <property type="entry name" value="MGS"/>
    <property type="match status" value="1"/>
</dbReference>
<accession>B2S7P0</accession>
<feature type="chain" id="PRO_1000096042" description="Bifunctional purine biosynthesis protein PurH">
    <location>
        <begin position="1"/>
        <end position="538"/>
    </location>
</feature>
<feature type="domain" description="MGS-like" evidence="2">
    <location>
        <begin position="6"/>
        <end position="158"/>
    </location>
</feature>
<name>PUR9_BRUA1</name>
<reference key="1">
    <citation type="journal article" date="2008" name="PLoS ONE">
        <title>Genome sequence of Brucella abortus vaccine strain S19 compared to virulent strains yields candidate virulence genes.</title>
        <authorList>
            <person name="Crasta O.R."/>
            <person name="Folkerts O."/>
            <person name="Fei Z."/>
            <person name="Mane S.P."/>
            <person name="Evans C."/>
            <person name="Martino-Catt S."/>
            <person name="Bricker B."/>
            <person name="Yu G."/>
            <person name="Du L."/>
            <person name="Sobral B.W."/>
        </authorList>
    </citation>
    <scope>NUCLEOTIDE SEQUENCE [LARGE SCALE GENOMIC DNA]</scope>
    <source>
        <strain>S19</strain>
    </source>
</reference>
<protein>
    <recommendedName>
        <fullName evidence="1">Bifunctional purine biosynthesis protein PurH</fullName>
    </recommendedName>
    <domain>
        <recommendedName>
            <fullName evidence="1">Phosphoribosylaminoimidazolecarboxamide formyltransferase</fullName>
            <ecNumber evidence="1">2.1.2.3</ecNumber>
        </recommendedName>
        <alternativeName>
            <fullName evidence="1">AICAR transformylase</fullName>
        </alternativeName>
    </domain>
    <domain>
        <recommendedName>
            <fullName evidence="1">IMP cyclohydrolase</fullName>
            <ecNumber evidence="1">3.5.4.10</ecNumber>
        </recommendedName>
        <alternativeName>
            <fullName evidence="1">ATIC</fullName>
        </alternativeName>
        <alternativeName>
            <fullName evidence="1">IMP synthase</fullName>
        </alternativeName>
        <alternativeName>
            <fullName evidence="1">Inosinicase</fullName>
        </alternativeName>
    </domain>
</protein>
<sequence length="538" mass="56453">MAVSSKHIPAPDLHRVRRALLSVSDKTGLIDFAKALHANGVEILSTGGTAKSIAAAGIPVKDVSEITGFPEIMDGRVKTLHPAVHGGLLAVRNDPEHVAAMEEHGIGGIDLAVINLYPFEEVRFKGGDYDTTVENIDIGGPAMIRASAKNHAYVATVVDPADYADVVAELEKHSGSLPLAFRKKLAAKAFSRTAAYDAAISNWFAEAIDEETPTYRAAAGKLHSVMRYGENPHQTAGFYLTGEKRPGVATATQLQGKQLSYNNINDTDAAFELVAEFDPARTAAVAIIKHANPCGVAEASTIKEAYLKALACDPVSAFGGIVALNRTLDEEAAEEIVKTFTEVIIAPDATEGAQAIVAAKKNLRLLVTGGLPDPRAKGIAAKTVAGGLLVQSRDNGVVDDLDLKVVTKRAPTEAELNDLKFAFRVGKHVKSNAIVYVKDGATVGIGAGQMSRVDSARIAARKAEDAAEAAGLAAPLTKGCVVASDAFFPFADGLLSAVEAGATAVIQPGGSMRDDEVIAAADEHGIAMVMTGMRHFRH</sequence>
<proteinExistence type="inferred from homology"/>
<keyword id="KW-0378">Hydrolase</keyword>
<keyword id="KW-0511">Multifunctional enzyme</keyword>
<keyword id="KW-0658">Purine biosynthesis</keyword>
<keyword id="KW-0808">Transferase</keyword>